<proteinExistence type="evidence at protein level"/>
<sequence>MHPIVIIGSGMAGYTLAREFRKLNPEHELVMICADDAVNYAKPTLSNALSGNKAPEQIPLGDAEKMSTQLKLQILSETWVKAINPETHELKLEKNGQETIQPYSKLVLAVGANPTRLAIAGDGSDDIHVVNSLIDYRAFRENLAKRQDKRVVILGAGLIGCEFANDLQHTGHQVTVIDLSPRPLGRLLPAHIADAFQKNLEESGIHFVLSTTVEKVSKINDGQDYAVTLANGQTLVADIVLSAIGLQPNIDLAKHAGVHTSRGILTNSLLETNLEDIYAIGDCAEVNGTLLPYVMPIMQQARALAKTLSGETTHVHYPAMPVAVKTPAAPLTVLPVPVDVDVNWETEEFEDGMLAKAIDNTDTLRGFVLLGATAGKQRLTLTKLVPDLIPAQL</sequence>
<comment type="function">
    <text evidence="3">Involved in the hydrocarbon hydroxylating system, which transfers electrons from NADH to rubredoxin reductase and then through rubredoxin to alkane 1 monooxygenase.</text>
</comment>
<comment type="catalytic activity">
    <reaction>
        <text>2 reduced [rubredoxin] + NAD(+) + H(+) = 2 oxidized [rubredoxin] + NADH</text>
        <dbReference type="Rhea" id="RHEA:18597"/>
        <dbReference type="Rhea" id="RHEA-COMP:10302"/>
        <dbReference type="Rhea" id="RHEA-COMP:10303"/>
        <dbReference type="ChEBI" id="CHEBI:15378"/>
        <dbReference type="ChEBI" id="CHEBI:29033"/>
        <dbReference type="ChEBI" id="CHEBI:29034"/>
        <dbReference type="ChEBI" id="CHEBI:57540"/>
        <dbReference type="ChEBI" id="CHEBI:57945"/>
        <dbReference type="EC" id="1.18.1.1"/>
    </reaction>
</comment>
<comment type="cofactor">
    <cofactor evidence="4">
        <name>FAD</name>
        <dbReference type="ChEBI" id="CHEBI:57692"/>
    </cofactor>
</comment>
<comment type="pathway">
    <text>Hydrocarbon metabolism; alkane degradation.</text>
</comment>
<comment type="subunit">
    <text evidence="1">Homodimer.</text>
</comment>
<comment type="subcellular location">
    <subcellularLocation>
        <location>Cytoplasm</location>
    </subcellularLocation>
</comment>
<comment type="induction">
    <text evidence="3">Constitutively expressed.</text>
</comment>
<comment type="similarity">
    <text evidence="4">Belongs to the FAD-dependent oxidoreductase family.</text>
</comment>
<keyword id="KW-0963">Cytoplasm</keyword>
<keyword id="KW-0274">FAD</keyword>
<keyword id="KW-0285">Flavoprotein</keyword>
<keyword id="KW-0520">NAD</keyword>
<keyword id="KW-0560">Oxidoreductase</keyword>
<name>RURE_ACIAD</name>
<reference key="1">
    <citation type="journal article" date="1995" name="Microbiology">
        <title>Two genes encoding proteins with similarities to rubredoxin and rubredoxin reductase are required for conversion of dodecane to lauric acid in Acinetobacter calcoaceticus ADP1.</title>
        <authorList>
            <person name="Geissdoerfer W."/>
            <person name="Frosch C.S."/>
            <person name="Haspel G."/>
            <person name="Ehrt S."/>
            <person name="Hillen W."/>
        </authorList>
    </citation>
    <scope>NUCLEOTIDE SEQUENCE [GENOMIC DNA]</scope>
</reference>
<reference key="2">
    <citation type="journal article" date="2004" name="Nucleic Acids Res.">
        <title>Unique features revealed by the genome sequence of Acinetobacter sp. ADP1, a versatile and naturally transformation competent bacterium.</title>
        <authorList>
            <person name="Barbe V."/>
            <person name="Vallenet D."/>
            <person name="Fonknechten N."/>
            <person name="Kreimeyer A."/>
            <person name="Oztas S."/>
            <person name="Labarre L."/>
            <person name="Cruveiller S."/>
            <person name="Robert C."/>
            <person name="Duprat S."/>
            <person name="Wincker P."/>
            <person name="Ornston L.N."/>
            <person name="Weissenbach J."/>
            <person name="Marliere P."/>
            <person name="Cohen G.N."/>
            <person name="Medigue C."/>
        </authorList>
    </citation>
    <scope>NUCLEOTIDE SEQUENCE [LARGE SCALE GENOMIC DNA]</scope>
    <source>
        <strain>ATCC 33305 / BD413 / ADP1</strain>
    </source>
</reference>
<reference key="3">
    <citation type="submission" date="1995-06" db="EMBL/GenBank/DDBJ databases">
        <authorList>
            <person name="Kok R.G."/>
            <person name="Bart A."/>
            <person name="Hellingwerf K.J."/>
        </authorList>
    </citation>
    <scope>NUCLEOTIDE SEQUENCE [GENOMIC DNA] OF 250-392</scope>
</reference>
<reference key="4">
    <citation type="journal article" date="1999" name="J. Bacteriol.">
        <title>The genes rubA and rubB for alkane degradation in Acinetobacter sp. strain ADP1 are in an operon with estB, encoding an esterase, and oxyR.</title>
        <authorList>
            <person name="Geissdorfer W."/>
            <person name="Kok R.G."/>
            <person name="Ratajczak A."/>
            <person name="Hellingwerf K.J."/>
            <person name="Hillen W."/>
        </authorList>
    </citation>
    <scope>FUNCTION IN ALKANE DEGRADATION</scope>
    <scope>INDUCTION</scope>
</reference>
<organism>
    <name type="scientific">Acinetobacter baylyi (strain ATCC 33305 / BD413 / ADP1)</name>
    <dbReference type="NCBI Taxonomy" id="62977"/>
    <lineage>
        <taxon>Bacteria</taxon>
        <taxon>Pseudomonadati</taxon>
        <taxon>Pseudomonadota</taxon>
        <taxon>Gammaproteobacteria</taxon>
        <taxon>Moraxellales</taxon>
        <taxon>Moraxellaceae</taxon>
        <taxon>Acinetobacter</taxon>
    </lineage>
</organism>
<feature type="chain" id="PRO_0000167649" description="Rubredoxin-NAD(+) reductase">
    <location>
        <begin position="1"/>
        <end position="393"/>
    </location>
</feature>
<feature type="binding site" evidence="2">
    <location>
        <begin position="9"/>
        <end position="12"/>
    </location>
    <ligand>
        <name>FAD</name>
        <dbReference type="ChEBI" id="CHEBI:57692"/>
    </ligand>
</feature>
<feature type="binding site" evidence="2">
    <location>
        <begin position="33"/>
        <end position="34"/>
    </location>
    <ligand>
        <name>FAD</name>
        <dbReference type="ChEBI" id="CHEBI:57692"/>
    </ligand>
</feature>
<feature type="binding site" evidence="2">
    <location>
        <position position="42"/>
    </location>
    <ligand>
        <name>FAD</name>
        <dbReference type="ChEBI" id="CHEBI:57692"/>
    </ligand>
</feature>
<feature type="binding site" evidence="2">
    <location>
        <position position="80"/>
    </location>
    <ligand>
        <name>FAD</name>
        <dbReference type="ChEBI" id="CHEBI:57692"/>
    </ligand>
</feature>
<feature type="binding site" evidence="2">
    <location>
        <position position="162"/>
    </location>
    <ligand>
        <name>FAD</name>
        <dbReference type="ChEBI" id="CHEBI:57692"/>
    </ligand>
</feature>
<feature type="binding site" evidence="2">
    <location>
        <position position="282"/>
    </location>
    <ligand>
        <name>FAD</name>
        <dbReference type="ChEBI" id="CHEBI:57692"/>
    </ligand>
</feature>
<feature type="binding site" evidence="2">
    <location>
        <position position="294"/>
    </location>
    <ligand>
        <name>FAD</name>
        <dbReference type="ChEBI" id="CHEBI:57692"/>
    </ligand>
</feature>
<feature type="binding site" evidence="2">
    <location>
        <position position="325"/>
    </location>
    <ligand>
        <name>FAD</name>
        <dbReference type="ChEBI" id="CHEBI:57692"/>
    </ligand>
</feature>
<feature type="sequence conflict" description="In Ref. 1." evidence="4" ref="1">
    <original>LSE</original>
    <variation>SSD</variation>
    <location>
        <begin position="75"/>
        <end position="77"/>
    </location>
</feature>
<feature type="sequence conflict" description="In Ref. 1." evidence="4" ref="1">
    <original>NLEESG</original>
    <variation>IWRKR</variation>
    <location>
        <begin position="199"/>
        <end position="204"/>
    </location>
</feature>
<evidence type="ECO:0000250" key="1"/>
<evidence type="ECO:0000250" key="2">
    <source>
        <dbReference type="UniProtKB" id="Q9HTK9"/>
    </source>
</evidence>
<evidence type="ECO:0000269" key="3">
    <source>
    </source>
</evidence>
<evidence type="ECO:0000305" key="4"/>
<dbReference type="EC" id="1.18.1.1"/>
<dbReference type="EMBL" id="Z46863">
    <property type="protein sequence ID" value="CAA86926.1"/>
    <property type="molecule type" value="Genomic_DNA"/>
</dbReference>
<dbReference type="EMBL" id="CR543861">
    <property type="protein sequence ID" value="CAG67953.1"/>
    <property type="molecule type" value="Genomic_DNA"/>
</dbReference>
<dbReference type="EMBL" id="X88895">
    <property type="protein sequence ID" value="CAA61350.1"/>
    <property type="molecule type" value="Genomic_DNA"/>
</dbReference>
<dbReference type="RefSeq" id="WP_004921642.1">
    <property type="nucleotide sequence ID" value="NC_005966.1"/>
</dbReference>
<dbReference type="SMR" id="P42454"/>
<dbReference type="STRING" id="202950.GCA_001485005_01300"/>
<dbReference type="GeneID" id="45233507"/>
<dbReference type="KEGG" id="aci:ACIAD1065"/>
<dbReference type="eggNOG" id="COG1251">
    <property type="taxonomic scope" value="Bacteria"/>
</dbReference>
<dbReference type="HOGENOM" id="CLU_003291_4_4_6"/>
<dbReference type="OrthoDB" id="9808980at2"/>
<dbReference type="BioCyc" id="ASP62977:ACIAD_RS04910-MONOMER"/>
<dbReference type="UniPathway" id="UPA00191"/>
<dbReference type="Proteomes" id="UP000000430">
    <property type="component" value="Chromosome"/>
</dbReference>
<dbReference type="GO" id="GO:0005737">
    <property type="term" value="C:cytoplasm"/>
    <property type="evidence" value="ECO:0007669"/>
    <property type="project" value="UniProtKB-SubCell"/>
</dbReference>
<dbReference type="GO" id="GO:0015044">
    <property type="term" value="F:rubredoxin-NAD+ reductase activity"/>
    <property type="evidence" value="ECO:0007669"/>
    <property type="project" value="UniProtKB-EC"/>
</dbReference>
<dbReference type="GO" id="GO:0043448">
    <property type="term" value="P:alkane catabolic process"/>
    <property type="evidence" value="ECO:0000315"/>
    <property type="project" value="UniProtKB"/>
</dbReference>
<dbReference type="FunFam" id="3.30.390.120:FF:000002">
    <property type="entry name" value="Rubredoxin-NAD(+) reductase"/>
    <property type="match status" value="1"/>
</dbReference>
<dbReference type="FunFam" id="3.50.50.60:FF:000319">
    <property type="entry name" value="Rubredoxin-NAD(+) reductase"/>
    <property type="match status" value="1"/>
</dbReference>
<dbReference type="Gene3D" id="3.30.390.120">
    <property type="match status" value="1"/>
</dbReference>
<dbReference type="Gene3D" id="3.50.50.60">
    <property type="entry name" value="FAD/NAD(P)-binding domain"/>
    <property type="match status" value="2"/>
</dbReference>
<dbReference type="InterPro" id="IPR050260">
    <property type="entry name" value="FAD-bd_OxRdtase"/>
</dbReference>
<dbReference type="InterPro" id="IPR036188">
    <property type="entry name" value="FAD/NAD-bd_sf"/>
</dbReference>
<dbReference type="InterPro" id="IPR023753">
    <property type="entry name" value="FAD/NAD-binding_dom"/>
</dbReference>
<dbReference type="InterPro" id="IPR041364">
    <property type="entry name" value="Rbx-bd"/>
</dbReference>
<dbReference type="PANTHER" id="PTHR43429:SF3">
    <property type="entry name" value="NITRITE REDUCTASE [NAD(P)H]"/>
    <property type="match status" value="1"/>
</dbReference>
<dbReference type="PANTHER" id="PTHR43429">
    <property type="entry name" value="PYRIDINE NUCLEOTIDE-DISULFIDE OXIDOREDUCTASE DOMAIN-CONTAINING"/>
    <property type="match status" value="1"/>
</dbReference>
<dbReference type="Pfam" id="PF07992">
    <property type="entry name" value="Pyr_redox_2"/>
    <property type="match status" value="1"/>
</dbReference>
<dbReference type="Pfam" id="PF18113">
    <property type="entry name" value="Rbx_binding"/>
    <property type="match status" value="1"/>
</dbReference>
<dbReference type="PRINTS" id="PR00368">
    <property type="entry name" value="FADPNR"/>
</dbReference>
<dbReference type="PRINTS" id="PR00411">
    <property type="entry name" value="PNDRDTASEI"/>
</dbReference>
<dbReference type="SUPFAM" id="SSF51905">
    <property type="entry name" value="FAD/NAD(P)-binding domain"/>
    <property type="match status" value="1"/>
</dbReference>
<protein>
    <recommendedName>
        <fullName>Rubredoxin-NAD(+) reductase</fullName>
        <shortName>RdxR</shortName>
        <ecNumber>1.18.1.1</ecNumber>
    </recommendedName>
</protein>
<gene>
    <name type="primary">rubB</name>
    <name type="ordered locus">ACIAD1065</name>
</gene>
<accession>P42454</accession>
<accession>Q6FDA6</accession>